<evidence type="ECO:0000250" key="1"/>
<evidence type="ECO:0000250" key="2">
    <source>
        <dbReference type="UniProtKB" id="Q96BF6"/>
    </source>
</evidence>
<evidence type="ECO:0000255" key="3">
    <source>
        <dbReference type="PROSITE-ProRule" id="PRU00037"/>
    </source>
</evidence>
<evidence type="ECO:0000255" key="4">
    <source>
        <dbReference type="PROSITE-ProRule" id="PRU00784"/>
    </source>
</evidence>
<evidence type="ECO:0000256" key="5">
    <source>
        <dbReference type="SAM" id="MobiDB-lite"/>
    </source>
</evidence>
<organism>
    <name type="scientific">Rattus norvegicus</name>
    <name type="common">Rat</name>
    <dbReference type="NCBI Taxonomy" id="10116"/>
    <lineage>
        <taxon>Eukaryota</taxon>
        <taxon>Metazoa</taxon>
        <taxon>Chordata</taxon>
        <taxon>Craniata</taxon>
        <taxon>Vertebrata</taxon>
        <taxon>Euteleostomi</taxon>
        <taxon>Mammalia</taxon>
        <taxon>Eutheria</taxon>
        <taxon>Euarchontoglires</taxon>
        <taxon>Glires</taxon>
        <taxon>Rodentia</taxon>
        <taxon>Myomorpha</taxon>
        <taxon>Muroidea</taxon>
        <taxon>Muridae</taxon>
        <taxon>Murinae</taxon>
        <taxon>Rattus</taxon>
    </lineage>
</organism>
<accession>Q562B4</accession>
<feature type="chain" id="PRO_0000263670" description="Nucleus accumbens-associated protein 2">
    <location>
        <begin position="1"/>
        <end position="585"/>
    </location>
</feature>
<feature type="domain" description="BTB" evidence="3">
    <location>
        <begin position="30"/>
        <end position="94"/>
    </location>
</feature>
<feature type="domain" description="BEN" evidence="4">
    <location>
        <begin position="348"/>
        <end position="445"/>
    </location>
</feature>
<feature type="region of interest" description="Disordered" evidence="5">
    <location>
        <begin position="238"/>
        <end position="269"/>
    </location>
</feature>
<feature type="region of interest" description="Disordered" evidence="5">
    <location>
        <begin position="541"/>
        <end position="585"/>
    </location>
</feature>
<feature type="compositionally biased region" description="Polar residues" evidence="5">
    <location>
        <begin position="238"/>
        <end position="261"/>
    </location>
</feature>
<feature type="compositionally biased region" description="Polar residues" evidence="5">
    <location>
        <begin position="549"/>
        <end position="571"/>
    </location>
</feature>
<feature type="cross-link" description="Glycyl lysine isopeptide (Lys-Gly) (interchain with G-Cter in SUMO2)" evidence="2">
    <location>
        <position position="171"/>
    </location>
</feature>
<feature type="cross-link" description="Glycyl lysine isopeptide (Lys-Gly) (interchain with G-Cter in SUMO2)" evidence="2">
    <location>
        <position position="215"/>
    </location>
</feature>
<feature type="cross-link" description="Glycyl lysine isopeptide (Lys-Gly) (interchain with G-Cter in SUMO2)" evidence="2">
    <location>
        <position position="296"/>
    </location>
</feature>
<feature type="cross-link" description="Glycyl lysine isopeptide (Lys-Gly) (interchain with G-Cter in SUMO2)" evidence="2">
    <location>
        <position position="426"/>
    </location>
</feature>
<feature type="cross-link" description="Glycyl lysine isopeptide (Lys-Gly) (interchain with G-Cter in SUMO2)" evidence="2">
    <location>
        <position position="453"/>
    </location>
</feature>
<comment type="function">
    <text evidence="1">Functions as a transcriptional repressor through its association with the NuRD complex. Recruits the NuRD complex to the promoter of MDM2, leading to the repression of MDM2 transcription and subsequent stability of p53/TP53 (By similarity).</text>
</comment>
<comment type="subunit">
    <text evidence="1">Homooligomer; mediated by the BTB domain. Interacts with the NuRD complex. Interacts (via C-terminal part) with HDAC2. Interacts (via BTB domain) with MTA1, MTA2 and MTA3.</text>
</comment>
<comment type="subcellular location">
    <subcellularLocation>
        <location>Nucleus</location>
    </subcellularLocation>
    <text evidence="1">Predominantly associated with chromatin.</text>
</comment>
<sequence>MSQMLHIEIPNFGNTVLGCLNEQRLLGLYCDVSIVVKGQAFKAHRAVLAASSLYFRDLFSGNSKSAFELPGTVPPACFQQILSFCYTGKLTMAASEQLVVMYTAGFLQIQHIVERGTDLMFKVSSPHCDSQTAMIEDASSEPQSPCNQLQPATAAYATSPSVPIPLLTRVKHEAMEMPPATGPGLASKRPLDTGPRDGVAVATGAAGTPGTAPLKLPRVSYYGVPSLATLIPSIQQVPYPQGERTSPGASSLPTTDSSTSYHNEDEDDDEAYDTMVEEQYGQMYIKATGNYAVQEKPEPVPLESRSCVLIRRDLVALPASLISQIGYRCHPKLYSEGDPGEKLELVAGSGVYITRGQLMNCHLCAGVKHKVLLRRLLATFFDRNTLANSCGTGIRSSTSDPSRKPLDSRVLNAVKLYCQNFAPSFKESEMNVIAADMCTNARRVRKRWLPKIKSMLPEGVEMYRSVMGASAASLPLDPEFPSAASQVFEQRIYAERRNDAATIVALRTDAVNVDLSTSANPAFEANEEVDGAGSVIQEVAAPEQLPADGQSSPQAFEQGNTSSSRPQTPVATATRRPEGTYAGTL</sequence>
<reference key="1">
    <citation type="journal article" date="2004" name="Nature">
        <title>Genome sequence of the Brown Norway rat yields insights into mammalian evolution.</title>
        <authorList>
            <person name="Gibbs R.A."/>
            <person name="Weinstock G.M."/>
            <person name="Metzker M.L."/>
            <person name="Muzny D.M."/>
            <person name="Sodergren E.J."/>
            <person name="Scherer S."/>
            <person name="Scott G."/>
            <person name="Steffen D."/>
            <person name="Worley K.C."/>
            <person name="Burch P.E."/>
            <person name="Okwuonu G."/>
            <person name="Hines S."/>
            <person name="Lewis L."/>
            <person name="Deramo C."/>
            <person name="Delgado O."/>
            <person name="Dugan-Rocha S."/>
            <person name="Miner G."/>
            <person name="Morgan M."/>
            <person name="Hawes A."/>
            <person name="Gill R."/>
            <person name="Holt R.A."/>
            <person name="Adams M.D."/>
            <person name="Amanatides P.G."/>
            <person name="Baden-Tillson H."/>
            <person name="Barnstead M."/>
            <person name="Chin S."/>
            <person name="Evans C.A."/>
            <person name="Ferriera S."/>
            <person name="Fosler C."/>
            <person name="Glodek A."/>
            <person name="Gu Z."/>
            <person name="Jennings D."/>
            <person name="Kraft C.L."/>
            <person name="Nguyen T."/>
            <person name="Pfannkoch C.M."/>
            <person name="Sitter C."/>
            <person name="Sutton G.G."/>
            <person name="Venter J.C."/>
            <person name="Woodage T."/>
            <person name="Smith D."/>
            <person name="Lee H.-M."/>
            <person name="Gustafson E."/>
            <person name="Cahill P."/>
            <person name="Kana A."/>
            <person name="Doucette-Stamm L."/>
            <person name="Weinstock K."/>
            <person name="Fechtel K."/>
            <person name="Weiss R.B."/>
            <person name="Dunn D.M."/>
            <person name="Green E.D."/>
            <person name="Blakesley R.W."/>
            <person name="Bouffard G.G."/>
            <person name="De Jong P.J."/>
            <person name="Osoegawa K."/>
            <person name="Zhu B."/>
            <person name="Marra M."/>
            <person name="Schein J."/>
            <person name="Bosdet I."/>
            <person name="Fjell C."/>
            <person name="Jones S."/>
            <person name="Krzywinski M."/>
            <person name="Mathewson C."/>
            <person name="Siddiqui A."/>
            <person name="Wye N."/>
            <person name="McPherson J."/>
            <person name="Zhao S."/>
            <person name="Fraser C.M."/>
            <person name="Shetty J."/>
            <person name="Shatsman S."/>
            <person name="Geer K."/>
            <person name="Chen Y."/>
            <person name="Abramzon S."/>
            <person name="Nierman W.C."/>
            <person name="Havlak P.H."/>
            <person name="Chen R."/>
            <person name="Durbin K.J."/>
            <person name="Egan A."/>
            <person name="Ren Y."/>
            <person name="Song X.-Z."/>
            <person name="Li B."/>
            <person name="Liu Y."/>
            <person name="Qin X."/>
            <person name="Cawley S."/>
            <person name="Cooney A.J."/>
            <person name="D'Souza L.M."/>
            <person name="Martin K."/>
            <person name="Wu J.Q."/>
            <person name="Gonzalez-Garay M.L."/>
            <person name="Jackson A.R."/>
            <person name="Kalafus K.J."/>
            <person name="McLeod M.P."/>
            <person name="Milosavljevic A."/>
            <person name="Virk D."/>
            <person name="Volkov A."/>
            <person name="Wheeler D.A."/>
            <person name="Zhang Z."/>
            <person name="Bailey J.A."/>
            <person name="Eichler E.E."/>
            <person name="Tuzun E."/>
            <person name="Birney E."/>
            <person name="Mongin E."/>
            <person name="Ureta-Vidal A."/>
            <person name="Woodwark C."/>
            <person name="Zdobnov E."/>
            <person name="Bork P."/>
            <person name="Suyama M."/>
            <person name="Torrents D."/>
            <person name="Alexandersson M."/>
            <person name="Trask B.J."/>
            <person name="Young J.M."/>
            <person name="Huang H."/>
            <person name="Wang H."/>
            <person name="Xing H."/>
            <person name="Daniels S."/>
            <person name="Gietzen D."/>
            <person name="Schmidt J."/>
            <person name="Stevens K."/>
            <person name="Vitt U."/>
            <person name="Wingrove J."/>
            <person name="Camara F."/>
            <person name="Mar Alba M."/>
            <person name="Abril J.F."/>
            <person name="Guigo R."/>
            <person name="Smit A."/>
            <person name="Dubchak I."/>
            <person name="Rubin E.M."/>
            <person name="Couronne O."/>
            <person name="Poliakov A."/>
            <person name="Huebner N."/>
            <person name="Ganten D."/>
            <person name="Goesele C."/>
            <person name="Hummel O."/>
            <person name="Kreitler T."/>
            <person name="Lee Y.-A."/>
            <person name="Monti J."/>
            <person name="Schulz H."/>
            <person name="Zimdahl H."/>
            <person name="Himmelbauer H."/>
            <person name="Lehrach H."/>
            <person name="Jacob H.J."/>
            <person name="Bromberg S."/>
            <person name="Gullings-Handley J."/>
            <person name="Jensen-Seaman M.I."/>
            <person name="Kwitek A.E."/>
            <person name="Lazar J."/>
            <person name="Pasko D."/>
            <person name="Tonellato P.J."/>
            <person name="Twigger S."/>
            <person name="Ponting C.P."/>
            <person name="Duarte J.M."/>
            <person name="Rice S."/>
            <person name="Goodstadt L."/>
            <person name="Beatson S.A."/>
            <person name="Emes R.D."/>
            <person name="Winter E.E."/>
            <person name="Webber C."/>
            <person name="Brandt P."/>
            <person name="Nyakatura G."/>
            <person name="Adetobi M."/>
            <person name="Chiaromonte F."/>
            <person name="Elnitski L."/>
            <person name="Eswara P."/>
            <person name="Hardison R.C."/>
            <person name="Hou M."/>
            <person name="Kolbe D."/>
            <person name="Makova K."/>
            <person name="Miller W."/>
            <person name="Nekrutenko A."/>
            <person name="Riemer C."/>
            <person name="Schwartz S."/>
            <person name="Taylor J."/>
            <person name="Yang S."/>
            <person name="Zhang Y."/>
            <person name="Lindpaintner K."/>
            <person name="Andrews T.D."/>
            <person name="Caccamo M."/>
            <person name="Clamp M."/>
            <person name="Clarke L."/>
            <person name="Curwen V."/>
            <person name="Durbin R.M."/>
            <person name="Eyras E."/>
            <person name="Searle S.M."/>
            <person name="Cooper G.M."/>
            <person name="Batzoglou S."/>
            <person name="Brudno M."/>
            <person name="Sidow A."/>
            <person name="Stone E.A."/>
            <person name="Payseur B.A."/>
            <person name="Bourque G."/>
            <person name="Lopez-Otin C."/>
            <person name="Puente X.S."/>
            <person name="Chakrabarti K."/>
            <person name="Chatterji S."/>
            <person name="Dewey C."/>
            <person name="Pachter L."/>
            <person name="Bray N."/>
            <person name="Yap V.B."/>
            <person name="Caspi A."/>
            <person name="Tesler G."/>
            <person name="Pevzner P.A."/>
            <person name="Haussler D."/>
            <person name="Roskin K.M."/>
            <person name="Baertsch R."/>
            <person name="Clawson H."/>
            <person name="Furey T.S."/>
            <person name="Hinrichs A.S."/>
            <person name="Karolchik D."/>
            <person name="Kent W.J."/>
            <person name="Rosenbloom K.R."/>
            <person name="Trumbower H."/>
            <person name="Weirauch M."/>
            <person name="Cooper D.N."/>
            <person name="Stenson P.D."/>
            <person name="Ma B."/>
            <person name="Brent M."/>
            <person name="Arumugam M."/>
            <person name="Shteynberg D."/>
            <person name="Copley R.R."/>
            <person name="Taylor M.S."/>
            <person name="Riethman H."/>
            <person name="Mudunuri U."/>
            <person name="Peterson J."/>
            <person name="Guyer M."/>
            <person name="Felsenfeld A."/>
            <person name="Old S."/>
            <person name="Mockrin S."/>
            <person name="Collins F.S."/>
        </authorList>
    </citation>
    <scope>NUCLEOTIDE SEQUENCE [LARGE SCALE GENOMIC DNA]</scope>
    <source>
        <strain>Brown Norway</strain>
    </source>
</reference>
<reference key="2">
    <citation type="journal article" date="2004" name="Genome Res.">
        <title>The status, quality, and expansion of the NIH full-length cDNA project: the Mammalian Gene Collection (MGC).</title>
        <authorList>
            <consortium name="The MGC Project Team"/>
        </authorList>
    </citation>
    <scope>NUCLEOTIDE SEQUENCE [LARGE SCALE MRNA] OF 22-585</scope>
    <source>
        <tissue>Ovary</tissue>
    </source>
</reference>
<protein>
    <recommendedName>
        <fullName>Nucleus accumbens-associated protein 2</fullName>
        <shortName>NAC-2</shortName>
    </recommendedName>
    <alternativeName>
        <fullName>BTB/POZ domain-containing protein 14A</fullName>
    </alternativeName>
</protein>
<dbReference type="EMBL" id="AABR03030473">
    <property type="status" value="NOT_ANNOTATED_CDS"/>
    <property type="molecule type" value="Genomic_DNA"/>
</dbReference>
<dbReference type="EMBL" id="BC092608">
    <property type="protein sequence ID" value="AAH92608.1"/>
    <property type="molecule type" value="mRNA"/>
</dbReference>
<dbReference type="RefSeq" id="NP_001094003.1">
    <property type="nucleotide sequence ID" value="NM_001100533.1"/>
</dbReference>
<dbReference type="SMR" id="Q562B4"/>
<dbReference type="FunCoup" id="Q562B4">
    <property type="interactions" value="976"/>
</dbReference>
<dbReference type="STRING" id="10116.ENSRNOP00000024786"/>
<dbReference type="GlyGen" id="Q562B4">
    <property type="glycosylation" value="2 sites"/>
</dbReference>
<dbReference type="PhosphoSitePlus" id="Q562B4"/>
<dbReference type="PaxDb" id="10116-ENSRNOP00000024786"/>
<dbReference type="GeneID" id="296583"/>
<dbReference type="KEGG" id="rno:296583"/>
<dbReference type="UCSC" id="RGD:1309292">
    <property type="organism name" value="rat"/>
</dbReference>
<dbReference type="AGR" id="RGD:1309292"/>
<dbReference type="CTD" id="138151"/>
<dbReference type="RGD" id="1309292">
    <property type="gene designation" value="Nacc2"/>
</dbReference>
<dbReference type="eggNOG" id="KOG1721">
    <property type="taxonomic scope" value="Eukaryota"/>
</dbReference>
<dbReference type="InParanoid" id="Q562B4"/>
<dbReference type="OrthoDB" id="10261408at2759"/>
<dbReference type="PhylomeDB" id="Q562B4"/>
<dbReference type="PRO" id="PR:Q562B4"/>
<dbReference type="Proteomes" id="UP000002494">
    <property type="component" value="Unplaced"/>
</dbReference>
<dbReference type="GO" id="GO:0000785">
    <property type="term" value="C:chromatin"/>
    <property type="evidence" value="ECO:0000266"/>
    <property type="project" value="RGD"/>
</dbReference>
<dbReference type="GO" id="GO:0005634">
    <property type="term" value="C:nucleus"/>
    <property type="evidence" value="ECO:0000250"/>
    <property type="project" value="UniProtKB"/>
</dbReference>
<dbReference type="GO" id="GO:0000981">
    <property type="term" value="F:DNA-binding transcription factor activity, RNA polymerase II-specific"/>
    <property type="evidence" value="ECO:0000318"/>
    <property type="project" value="GO_Central"/>
</dbReference>
<dbReference type="GO" id="GO:0001227">
    <property type="term" value="F:DNA-binding transcription repressor activity, RNA polymerase II-specific"/>
    <property type="evidence" value="ECO:0000266"/>
    <property type="project" value="RGD"/>
</dbReference>
<dbReference type="GO" id="GO:0042826">
    <property type="term" value="F:histone deacetylase binding"/>
    <property type="evidence" value="ECO:0000266"/>
    <property type="project" value="RGD"/>
</dbReference>
<dbReference type="GO" id="GO:0042803">
    <property type="term" value="F:protein homodimerization activity"/>
    <property type="evidence" value="ECO:0000266"/>
    <property type="project" value="RGD"/>
</dbReference>
<dbReference type="GO" id="GO:0044877">
    <property type="term" value="F:protein-containing complex binding"/>
    <property type="evidence" value="ECO:0000266"/>
    <property type="project" value="RGD"/>
</dbReference>
<dbReference type="GO" id="GO:0000978">
    <property type="term" value="F:RNA polymerase II cis-regulatory region sequence-specific DNA binding"/>
    <property type="evidence" value="ECO:0000266"/>
    <property type="project" value="RGD"/>
</dbReference>
<dbReference type="GO" id="GO:0008285">
    <property type="term" value="P:negative regulation of cell population proliferation"/>
    <property type="evidence" value="ECO:0000266"/>
    <property type="project" value="RGD"/>
</dbReference>
<dbReference type="GO" id="GO:0045892">
    <property type="term" value="P:negative regulation of DNA-templated transcription"/>
    <property type="evidence" value="ECO:0000250"/>
    <property type="project" value="UniProtKB"/>
</dbReference>
<dbReference type="GO" id="GO:0000122">
    <property type="term" value="P:negative regulation of transcription by RNA polymerase II"/>
    <property type="evidence" value="ECO:0000266"/>
    <property type="project" value="RGD"/>
</dbReference>
<dbReference type="GO" id="GO:1902231">
    <property type="term" value="P:positive regulation of intrinsic apoptotic signaling pathway in response to DNA damage"/>
    <property type="evidence" value="ECO:0000266"/>
    <property type="project" value="RGD"/>
</dbReference>
<dbReference type="GO" id="GO:0051260">
    <property type="term" value="P:protein homooligomerization"/>
    <property type="evidence" value="ECO:0000266"/>
    <property type="project" value="RGD"/>
</dbReference>
<dbReference type="GO" id="GO:0031503">
    <property type="term" value="P:protein-containing complex localization"/>
    <property type="evidence" value="ECO:0000266"/>
    <property type="project" value="RGD"/>
</dbReference>
<dbReference type="GO" id="GO:0006357">
    <property type="term" value="P:regulation of transcription by RNA polymerase II"/>
    <property type="evidence" value="ECO:0000318"/>
    <property type="project" value="GO_Central"/>
</dbReference>
<dbReference type="CDD" id="cd18289">
    <property type="entry name" value="BTB_POZ_BTBD14A_NAC2"/>
    <property type="match status" value="1"/>
</dbReference>
<dbReference type="FunFam" id="1.10.10.2590:FF:000002">
    <property type="entry name" value="Putative nucleus accumbens-associated protein 2"/>
    <property type="match status" value="1"/>
</dbReference>
<dbReference type="FunFam" id="3.30.710.10:FF:000009">
    <property type="entry name" value="Zinc finger and BTB domain-containing 37"/>
    <property type="match status" value="1"/>
</dbReference>
<dbReference type="Gene3D" id="1.10.10.2590">
    <property type="entry name" value="BEN domain"/>
    <property type="match status" value="1"/>
</dbReference>
<dbReference type="Gene3D" id="3.30.710.10">
    <property type="entry name" value="Potassium Channel Kv1.1, Chain A"/>
    <property type="match status" value="1"/>
</dbReference>
<dbReference type="InterPro" id="IPR018379">
    <property type="entry name" value="BEN_domain"/>
</dbReference>
<dbReference type="InterPro" id="IPR000210">
    <property type="entry name" value="BTB/POZ_dom"/>
</dbReference>
<dbReference type="InterPro" id="IPR011333">
    <property type="entry name" value="SKP1/BTB/POZ_sf"/>
</dbReference>
<dbReference type="InterPro" id="IPR050457">
    <property type="entry name" value="ZnFinger_BTB_dom_contain"/>
</dbReference>
<dbReference type="PANTHER" id="PTHR46105">
    <property type="entry name" value="AGAP004733-PA"/>
    <property type="match status" value="1"/>
</dbReference>
<dbReference type="PANTHER" id="PTHR46105:SF2">
    <property type="entry name" value="NUCLEUS ACCUMBENS-ASSOCIATED PROTEIN 2"/>
    <property type="match status" value="1"/>
</dbReference>
<dbReference type="Pfam" id="PF10523">
    <property type="entry name" value="BEN"/>
    <property type="match status" value="1"/>
</dbReference>
<dbReference type="Pfam" id="PF00651">
    <property type="entry name" value="BTB"/>
    <property type="match status" value="1"/>
</dbReference>
<dbReference type="SMART" id="SM01025">
    <property type="entry name" value="BEN"/>
    <property type="match status" value="1"/>
</dbReference>
<dbReference type="SMART" id="SM00225">
    <property type="entry name" value="BTB"/>
    <property type="match status" value="1"/>
</dbReference>
<dbReference type="SUPFAM" id="SSF54695">
    <property type="entry name" value="POZ domain"/>
    <property type="match status" value="1"/>
</dbReference>
<dbReference type="PROSITE" id="PS51457">
    <property type="entry name" value="BEN"/>
    <property type="match status" value="1"/>
</dbReference>
<dbReference type="PROSITE" id="PS50097">
    <property type="entry name" value="BTB"/>
    <property type="match status" value="1"/>
</dbReference>
<proteinExistence type="evidence at transcript level"/>
<keyword id="KW-1017">Isopeptide bond</keyword>
<keyword id="KW-0539">Nucleus</keyword>
<keyword id="KW-1185">Reference proteome</keyword>
<keyword id="KW-0832">Ubl conjugation</keyword>
<gene>
    <name type="primary">Nacc2</name>
    <name type="synonym">Btbd14a</name>
</gene>
<name>NACC2_RAT</name>